<keyword id="KW-0143">Chaperone</keyword>
<keyword id="KW-0963">Cytoplasm</keyword>
<keyword id="KW-0534">Nitrate assimilation</keyword>
<keyword id="KW-1185">Reference proteome</keyword>
<feature type="chain" id="PRO_0000096726" description="Nitrate reductase molybdenum cofactor assembly chaperone NarJ">
    <location>
        <begin position="1"/>
        <end position="236"/>
    </location>
</feature>
<accession>P0AF27</accession>
<accession>P11351</accession>
<gene>
    <name type="primary">narJ</name>
    <name type="ordered locus">Z2003</name>
    <name type="ordered locus">ECs1731</name>
</gene>
<organism>
    <name type="scientific">Escherichia coli O157:H7</name>
    <dbReference type="NCBI Taxonomy" id="83334"/>
    <lineage>
        <taxon>Bacteria</taxon>
        <taxon>Pseudomonadati</taxon>
        <taxon>Pseudomonadota</taxon>
        <taxon>Gammaproteobacteria</taxon>
        <taxon>Enterobacterales</taxon>
        <taxon>Enterobacteriaceae</taxon>
        <taxon>Escherichia</taxon>
    </lineage>
</organism>
<protein>
    <recommendedName>
        <fullName>Nitrate reductase molybdenum cofactor assembly chaperone NarJ</fullName>
    </recommendedName>
    <alternativeName>
        <fullName>Redox enzyme maturation protein NarJ</fullName>
    </alternativeName>
</protein>
<evidence type="ECO:0000250" key="1"/>
<evidence type="ECO:0000305" key="2"/>
<name>NARJ_ECO57</name>
<proteinExistence type="inferred from homology"/>
<dbReference type="EMBL" id="AE005174">
    <property type="protein sequence ID" value="AAG56086.1"/>
    <property type="molecule type" value="Genomic_DNA"/>
</dbReference>
<dbReference type="EMBL" id="BA000007">
    <property type="protein sequence ID" value="BAB35154.1"/>
    <property type="molecule type" value="Genomic_DNA"/>
</dbReference>
<dbReference type="PIR" id="C90845">
    <property type="entry name" value="C90845"/>
</dbReference>
<dbReference type="RefSeq" id="NP_309758.1">
    <property type="nucleotide sequence ID" value="NC_002695.1"/>
</dbReference>
<dbReference type="RefSeq" id="WP_000571681.1">
    <property type="nucleotide sequence ID" value="NZ_VOAI01000031.1"/>
</dbReference>
<dbReference type="SMR" id="P0AF27"/>
<dbReference type="STRING" id="155864.Z2003"/>
<dbReference type="GeneID" id="913130"/>
<dbReference type="KEGG" id="ece:Z2003"/>
<dbReference type="KEGG" id="ecs:ECs_1731"/>
<dbReference type="PATRIC" id="fig|386585.9.peg.1832"/>
<dbReference type="eggNOG" id="COG2180">
    <property type="taxonomic scope" value="Bacteria"/>
</dbReference>
<dbReference type="HOGENOM" id="CLU_084469_0_0_6"/>
<dbReference type="OMA" id="CELFDRG"/>
<dbReference type="Proteomes" id="UP000000558">
    <property type="component" value="Chromosome"/>
</dbReference>
<dbReference type="Proteomes" id="UP000002519">
    <property type="component" value="Chromosome"/>
</dbReference>
<dbReference type="GO" id="GO:0005737">
    <property type="term" value="C:cytoplasm"/>
    <property type="evidence" value="ECO:0000250"/>
    <property type="project" value="UniProtKB"/>
</dbReference>
<dbReference type="GO" id="GO:0016530">
    <property type="term" value="F:metallochaperone activity"/>
    <property type="evidence" value="ECO:0007669"/>
    <property type="project" value="TreeGrafter"/>
</dbReference>
<dbReference type="GO" id="GO:0051082">
    <property type="term" value="F:unfolded protein binding"/>
    <property type="evidence" value="ECO:0007669"/>
    <property type="project" value="InterPro"/>
</dbReference>
<dbReference type="GO" id="GO:0051131">
    <property type="term" value="P:chaperone-mediated protein complex assembly"/>
    <property type="evidence" value="ECO:0000250"/>
    <property type="project" value="UniProtKB"/>
</dbReference>
<dbReference type="GO" id="GO:0042128">
    <property type="term" value="P:nitrate assimilation"/>
    <property type="evidence" value="ECO:0000250"/>
    <property type="project" value="UniProtKB"/>
</dbReference>
<dbReference type="FunFam" id="1.10.3480.10:FF:000001">
    <property type="entry name" value="Nitrate reductase molybdenum cofactor assembly chaperone"/>
    <property type="match status" value="1"/>
</dbReference>
<dbReference type="Gene3D" id="1.10.3480.10">
    <property type="entry name" value="TorD-like"/>
    <property type="match status" value="1"/>
</dbReference>
<dbReference type="InterPro" id="IPR020945">
    <property type="entry name" value="DMSO/NO3_reduct_chaperone"/>
</dbReference>
<dbReference type="InterPro" id="IPR003765">
    <property type="entry name" value="NO3_reductase_chaperone_NarJ"/>
</dbReference>
<dbReference type="InterPro" id="IPR036411">
    <property type="entry name" value="TorD-like_sf"/>
</dbReference>
<dbReference type="NCBIfam" id="TIGR00684">
    <property type="entry name" value="narJ"/>
    <property type="match status" value="1"/>
</dbReference>
<dbReference type="PANTHER" id="PTHR43680">
    <property type="entry name" value="NITRATE REDUCTASE MOLYBDENUM COFACTOR ASSEMBLY CHAPERONE"/>
    <property type="match status" value="1"/>
</dbReference>
<dbReference type="PANTHER" id="PTHR43680:SF2">
    <property type="entry name" value="NITRATE REDUCTASE MOLYBDENUM COFACTOR ASSEMBLY CHAPERONE NARJ"/>
    <property type="match status" value="1"/>
</dbReference>
<dbReference type="Pfam" id="PF02613">
    <property type="entry name" value="Nitrate_red_del"/>
    <property type="match status" value="1"/>
</dbReference>
<dbReference type="SUPFAM" id="SSF89155">
    <property type="entry name" value="TorD-like"/>
    <property type="match status" value="1"/>
</dbReference>
<comment type="function">
    <text evidence="1">Chaperone required for proper molybdenum cofactor insertion and final assembly of the membrane-bound respiratory nitrate reductase 1.</text>
</comment>
<comment type="subunit">
    <text evidence="1">Binds specifically to the NarG subunit of the apoenzyme complex at two distinct sites, one interfering with membrane anchoring and another being involved in molybdenum insertion.</text>
</comment>
<comment type="subcellular location">
    <subcellularLocation>
        <location evidence="1">Cytoplasm</location>
    </subcellularLocation>
</comment>
<comment type="similarity">
    <text evidence="2">Belongs to the NarJ/NarW family.</text>
</comment>
<sequence>MIELVIVSRLLEYPDAALWQHQQEMFEAIAASKNLPKEDAHALGIFLRDLTTMDPLDAQAQYSELFDRGRATSLLLFEHVHGESRDRGQAMVDLLAQYEQHGLQLNSRELPDHLPLYLEYLAQLPQSEAVEGLKDIAPILALLSARLQQRESRYAVLFDLLLKLANTAIDSDKVAEKIADEARDDTPQALDAVWEEEQVKFFADKGCGDSAITAHQRRFAGAVAPQYLNITTGGQH</sequence>
<reference key="1">
    <citation type="journal article" date="2001" name="Nature">
        <title>Genome sequence of enterohaemorrhagic Escherichia coli O157:H7.</title>
        <authorList>
            <person name="Perna N.T."/>
            <person name="Plunkett G. III"/>
            <person name="Burland V."/>
            <person name="Mau B."/>
            <person name="Glasner J.D."/>
            <person name="Rose D.J."/>
            <person name="Mayhew G.F."/>
            <person name="Evans P.S."/>
            <person name="Gregor J."/>
            <person name="Kirkpatrick H.A."/>
            <person name="Posfai G."/>
            <person name="Hackett J."/>
            <person name="Klink S."/>
            <person name="Boutin A."/>
            <person name="Shao Y."/>
            <person name="Miller L."/>
            <person name="Grotbeck E.J."/>
            <person name="Davis N.W."/>
            <person name="Lim A."/>
            <person name="Dimalanta E.T."/>
            <person name="Potamousis K."/>
            <person name="Apodaca J."/>
            <person name="Anantharaman T.S."/>
            <person name="Lin J."/>
            <person name="Yen G."/>
            <person name="Schwartz D.C."/>
            <person name="Welch R.A."/>
            <person name="Blattner F.R."/>
        </authorList>
    </citation>
    <scope>NUCLEOTIDE SEQUENCE [LARGE SCALE GENOMIC DNA]</scope>
    <source>
        <strain>O157:H7 / EDL933 / ATCC 700927 / EHEC</strain>
    </source>
</reference>
<reference key="2">
    <citation type="journal article" date="2001" name="DNA Res.">
        <title>Complete genome sequence of enterohemorrhagic Escherichia coli O157:H7 and genomic comparison with a laboratory strain K-12.</title>
        <authorList>
            <person name="Hayashi T."/>
            <person name="Makino K."/>
            <person name="Ohnishi M."/>
            <person name="Kurokawa K."/>
            <person name="Ishii K."/>
            <person name="Yokoyama K."/>
            <person name="Han C.-G."/>
            <person name="Ohtsubo E."/>
            <person name="Nakayama K."/>
            <person name="Murata T."/>
            <person name="Tanaka M."/>
            <person name="Tobe T."/>
            <person name="Iida T."/>
            <person name="Takami H."/>
            <person name="Honda T."/>
            <person name="Sasakawa C."/>
            <person name="Ogasawara N."/>
            <person name="Yasunaga T."/>
            <person name="Kuhara S."/>
            <person name="Shiba T."/>
            <person name="Hattori M."/>
            <person name="Shinagawa H."/>
        </authorList>
    </citation>
    <scope>NUCLEOTIDE SEQUENCE [LARGE SCALE GENOMIC DNA]</scope>
    <source>
        <strain>O157:H7 / Sakai / RIMD 0509952 / EHEC</strain>
    </source>
</reference>